<evidence type="ECO:0000255" key="1">
    <source>
        <dbReference type="HAMAP-Rule" id="MF_00456"/>
    </source>
</evidence>
<reference key="1">
    <citation type="journal article" date="2002" name="Nat. Biotechnol.">
        <title>Genome sequence of the dissimilatory metal ion-reducing bacterium Shewanella oneidensis.</title>
        <authorList>
            <person name="Heidelberg J.F."/>
            <person name="Paulsen I.T."/>
            <person name="Nelson K.E."/>
            <person name="Gaidos E.J."/>
            <person name="Nelson W.C."/>
            <person name="Read T.D."/>
            <person name="Eisen J.A."/>
            <person name="Seshadri R."/>
            <person name="Ward N.L."/>
            <person name="Methe B.A."/>
            <person name="Clayton R.A."/>
            <person name="Meyer T."/>
            <person name="Tsapin A."/>
            <person name="Scott J."/>
            <person name="Beanan M.J."/>
            <person name="Brinkac L.M."/>
            <person name="Daugherty S.C."/>
            <person name="DeBoy R.T."/>
            <person name="Dodson R.J."/>
            <person name="Durkin A.S."/>
            <person name="Haft D.H."/>
            <person name="Kolonay J.F."/>
            <person name="Madupu R."/>
            <person name="Peterson J.D."/>
            <person name="Umayam L.A."/>
            <person name="White O."/>
            <person name="Wolf A.M."/>
            <person name="Vamathevan J.J."/>
            <person name="Weidman J.F."/>
            <person name="Impraim M."/>
            <person name="Lee K."/>
            <person name="Berry K.J."/>
            <person name="Lee C."/>
            <person name="Mueller J."/>
            <person name="Khouri H.M."/>
            <person name="Gill J."/>
            <person name="Utterback T.R."/>
            <person name="McDonald L.A."/>
            <person name="Feldblyum T.V."/>
            <person name="Smith H.O."/>
            <person name="Venter J.C."/>
            <person name="Nealson K.H."/>
            <person name="Fraser C.M."/>
        </authorList>
    </citation>
    <scope>NUCLEOTIDE SEQUENCE [LARGE SCALE GENOMIC DNA]</scope>
    <source>
        <strain>ATCC 700550 / JCM 31522 / CIP 106686 / LMG 19005 / NCIMB 14063 / MR-1</strain>
    </source>
</reference>
<dbReference type="EC" id="2.7.2.11" evidence="1"/>
<dbReference type="EMBL" id="AE014299">
    <property type="protein sequence ID" value="AAN54191.1"/>
    <property type="molecule type" value="Genomic_DNA"/>
</dbReference>
<dbReference type="RefSeq" id="NP_716746.1">
    <property type="nucleotide sequence ID" value="NC_004347.2"/>
</dbReference>
<dbReference type="RefSeq" id="WP_011071362.1">
    <property type="nucleotide sequence ID" value="NC_004347.2"/>
</dbReference>
<dbReference type="SMR" id="Q8EHU2"/>
<dbReference type="STRING" id="211586.SO_1121"/>
<dbReference type="PaxDb" id="211586-SO_1121"/>
<dbReference type="KEGG" id="son:SO_1121"/>
<dbReference type="PATRIC" id="fig|211586.12.peg.1074"/>
<dbReference type="eggNOG" id="COG0263">
    <property type="taxonomic scope" value="Bacteria"/>
</dbReference>
<dbReference type="HOGENOM" id="CLU_025400_2_0_6"/>
<dbReference type="OrthoDB" id="9804434at2"/>
<dbReference type="PhylomeDB" id="Q8EHU2"/>
<dbReference type="BioCyc" id="SONE211586:G1GMP-1031-MONOMER"/>
<dbReference type="UniPathway" id="UPA00098">
    <property type="reaction ID" value="UER00359"/>
</dbReference>
<dbReference type="Proteomes" id="UP000008186">
    <property type="component" value="Chromosome"/>
</dbReference>
<dbReference type="GO" id="GO:0005829">
    <property type="term" value="C:cytosol"/>
    <property type="evidence" value="ECO:0000318"/>
    <property type="project" value="GO_Central"/>
</dbReference>
<dbReference type="GO" id="GO:0005524">
    <property type="term" value="F:ATP binding"/>
    <property type="evidence" value="ECO:0007669"/>
    <property type="project" value="UniProtKB-KW"/>
</dbReference>
<dbReference type="GO" id="GO:0004349">
    <property type="term" value="F:glutamate 5-kinase activity"/>
    <property type="evidence" value="ECO:0000318"/>
    <property type="project" value="GO_Central"/>
</dbReference>
<dbReference type="GO" id="GO:0003723">
    <property type="term" value="F:RNA binding"/>
    <property type="evidence" value="ECO:0007669"/>
    <property type="project" value="InterPro"/>
</dbReference>
<dbReference type="GO" id="GO:0055129">
    <property type="term" value="P:L-proline biosynthetic process"/>
    <property type="evidence" value="ECO:0007669"/>
    <property type="project" value="UniProtKB-UniRule"/>
</dbReference>
<dbReference type="GO" id="GO:0006561">
    <property type="term" value="P:proline biosynthetic process"/>
    <property type="evidence" value="ECO:0000318"/>
    <property type="project" value="GO_Central"/>
</dbReference>
<dbReference type="CDD" id="cd04242">
    <property type="entry name" value="AAK_G5K_ProB"/>
    <property type="match status" value="1"/>
</dbReference>
<dbReference type="CDD" id="cd21157">
    <property type="entry name" value="PUA_G5K"/>
    <property type="match status" value="1"/>
</dbReference>
<dbReference type="FunFam" id="2.30.130.10:FF:000003">
    <property type="entry name" value="Glutamate 5-kinase"/>
    <property type="match status" value="1"/>
</dbReference>
<dbReference type="FunFam" id="3.40.1160.10:FF:000006">
    <property type="entry name" value="Glutamate 5-kinase"/>
    <property type="match status" value="1"/>
</dbReference>
<dbReference type="Gene3D" id="3.40.1160.10">
    <property type="entry name" value="Acetylglutamate kinase-like"/>
    <property type="match status" value="2"/>
</dbReference>
<dbReference type="Gene3D" id="2.30.130.10">
    <property type="entry name" value="PUA domain"/>
    <property type="match status" value="1"/>
</dbReference>
<dbReference type="HAMAP" id="MF_00456">
    <property type="entry name" value="ProB"/>
    <property type="match status" value="1"/>
</dbReference>
<dbReference type="InterPro" id="IPR036393">
    <property type="entry name" value="AceGlu_kinase-like_sf"/>
</dbReference>
<dbReference type="InterPro" id="IPR001048">
    <property type="entry name" value="Asp/Glu/Uridylate_kinase"/>
</dbReference>
<dbReference type="InterPro" id="IPR041739">
    <property type="entry name" value="G5K_ProB"/>
</dbReference>
<dbReference type="InterPro" id="IPR001057">
    <property type="entry name" value="Glu/AcGlu_kinase"/>
</dbReference>
<dbReference type="InterPro" id="IPR011529">
    <property type="entry name" value="Glu_5kinase"/>
</dbReference>
<dbReference type="InterPro" id="IPR005715">
    <property type="entry name" value="Glu_5kinase/COase_Synthase"/>
</dbReference>
<dbReference type="InterPro" id="IPR019797">
    <property type="entry name" value="Glutamate_5-kinase_CS"/>
</dbReference>
<dbReference type="InterPro" id="IPR002478">
    <property type="entry name" value="PUA"/>
</dbReference>
<dbReference type="InterPro" id="IPR015947">
    <property type="entry name" value="PUA-like_sf"/>
</dbReference>
<dbReference type="InterPro" id="IPR036974">
    <property type="entry name" value="PUA_sf"/>
</dbReference>
<dbReference type="NCBIfam" id="TIGR01027">
    <property type="entry name" value="proB"/>
    <property type="match status" value="1"/>
</dbReference>
<dbReference type="PANTHER" id="PTHR43654">
    <property type="entry name" value="GLUTAMATE 5-KINASE"/>
    <property type="match status" value="1"/>
</dbReference>
<dbReference type="PANTHER" id="PTHR43654:SF1">
    <property type="entry name" value="ISOPENTENYL PHOSPHATE KINASE"/>
    <property type="match status" value="1"/>
</dbReference>
<dbReference type="Pfam" id="PF00696">
    <property type="entry name" value="AA_kinase"/>
    <property type="match status" value="1"/>
</dbReference>
<dbReference type="Pfam" id="PF01472">
    <property type="entry name" value="PUA"/>
    <property type="match status" value="1"/>
</dbReference>
<dbReference type="PIRSF" id="PIRSF000729">
    <property type="entry name" value="GK"/>
    <property type="match status" value="1"/>
</dbReference>
<dbReference type="PRINTS" id="PR00474">
    <property type="entry name" value="GLU5KINASE"/>
</dbReference>
<dbReference type="SMART" id="SM00359">
    <property type="entry name" value="PUA"/>
    <property type="match status" value="1"/>
</dbReference>
<dbReference type="SUPFAM" id="SSF53633">
    <property type="entry name" value="Carbamate kinase-like"/>
    <property type="match status" value="1"/>
</dbReference>
<dbReference type="SUPFAM" id="SSF88697">
    <property type="entry name" value="PUA domain-like"/>
    <property type="match status" value="1"/>
</dbReference>
<dbReference type="PROSITE" id="PS00902">
    <property type="entry name" value="GLUTAMATE_5_KINASE"/>
    <property type="match status" value="1"/>
</dbReference>
<dbReference type="PROSITE" id="PS50890">
    <property type="entry name" value="PUA"/>
    <property type="match status" value="1"/>
</dbReference>
<name>PROB_SHEON</name>
<accession>Q8EHU2</accession>
<feature type="chain" id="PRO_0000109724" description="Glutamate 5-kinase">
    <location>
        <begin position="1"/>
        <end position="372"/>
    </location>
</feature>
<feature type="domain" description="PUA" evidence="1">
    <location>
        <begin position="280"/>
        <end position="358"/>
    </location>
</feature>
<feature type="binding site" evidence="1">
    <location>
        <position position="14"/>
    </location>
    <ligand>
        <name>ATP</name>
        <dbReference type="ChEBI" id="CHEBI:30616"/>
    </ligand>
</feature>
<feature type="binding site" evidence="1">
    <location>
        <position position="54"/>
    </location>
    <ligand>
        <name>substrate</name>
    </ligand>
</feature>
<feature type="binding site" evidence="1">
    <location>
        <position position="141"/>
    </location>
    <ligand>
        <name>substrate</name>
    </ligand>
</feature>
<feature type="binding site" evidence="1">
    <location>
        <position position="153"/>
    </location>
    <ligand>
        <name>substrate</name>
    </ligand>
</feature>
<feature type="binding site" evidence="1">
    <location>
        <begin position="173"/>
        <end position="174"/>
    </location>
    <ligand>
        <name>ATP</name>
        <dbReference type="ChEBI" id="CHEBI:30616"/>
    </ligand>
</feature>
<feature type="binding site" evidence="1">
    <location>
        <begin position="215"/>
        <end position="221"/>
    </location>
    <ligand>
        <name>ATP</name>
        <dbReference type="ChEBI" id="CHEBI:30616"/>
    </ligand>
</feature>
<comment type="function">
    <text evidence="1">Catalyzes the transfer of a phosphate group to glutamate to form L-glutamate 5-phosphate.</text>
</comment>
<comment type="catalytic activity">
    <reaction evidence="1">
        <text>L-glutamate + ATP = L-glutamyl 5-phosphate + ADP</text>
        <dbReference type="Rhea" id="RHEA:14877"/>
        <dbReference type="ChEBI" id="CHEBI:29985"/>
        <dbReference type="ChEBI" id="CHEBI:30616"/>
        <dbReference type="ChEBI" id="CHEBI:58274"/>
        <dbReference type="ChEBI" id="CHEBI:456216"/>
        <dbReference type="EC" id="2.7.2.11"/>
    </reaction>
</comment>
<comment type="pathway">
    <text evidence="1">Amino-acid biosynthesis; L-proline biosynthesis; L-glutamate 5-semialdehyde from L-glutamate: step 1/2.</text>
</comment>
<comment type="subcellular location">
    <subcellularLocation>
        <location evidence="1">Cytoplasm</location>
    </subcellularLocation>
</comment>
<comment type="similarity">
    <text evidence="1">Belongs to the glutamate 5-kinase family.</text>
</comment>
<organism>
    <name type="scientific">Shewanella oneidensis (strain ATCC 700550 / JCM 31522 / CIP 106686 / LMG 19005 / NCIMB 14063 / MR-1)</name>
    <dbReference type="NCBI Taxonomy" id="211586"/>
    <lineage>
        <taxon>Bacteria</taxon>
        <taxon>Pseudomonadati</taxon>
        <taxon>Pseudomonadota</taxon>
        <taxon>Gammaproteobacteria</taxon>
        <taxon>Alteromonadales</taxon>
        <taxon>Shewanellaceae</taxon>
        <taxon>Shewanella</taxon>
    </lineage>
</organism>
<protein>
    <recommendedName>
        <fullName evidence="1">Glutamate 5-kinase</fullName>
        <ecNumber evidence="1">2.7.2.11</ecNumber>
    </recommendedName>
    <alternativeName>
        <fullName evidence="1">Gamma-glutamyl kinase</fullName>
        <shortName evidence="1">GK</shortName>
    </alternativeName>
</protein>
<proteinExistence type="inferred from homology"/>
<keyword id="KW-0028">Amino-acid biosynthesis</keyword>
<keyword id="KW-0067">ATP-binding</keyword>
<keyword id="KW-0963">Cytoplasm</keyword>
<keyword id="KW-0418">Kinase</keyword>
<keyword id="KW-0547">Nucleotide-binding</keyword>
<keyword id="KW-0641">Proline biosynthesis</keyword>
<keyword id="KW-1185">Reference proteome</keyword>
<keyword id="KW-0808">Transferase</keyword>
<gene>
    <name evidence="1" type="primary">proB</name>
    <name type="ordered locus">SO_1121</name>
</gene>
<sequence>MNLSEIAYRRVVVKLGTSVLTSGSKQLDKAHMVELARQMAALMRSGVEVVLCTSGAIAAGREHLQYPALPDTMANKQLLAAVGQSQLILAWAQLFSIYGLHVGQLLLTRADLHDRERYLNARDTLNALLANNIIPIINENDAVATNEIKVGDNDNLSARAALLCDADLLILLTDQKGLFDADPRTNPNAKLISQVEKIDDSLRLLAGGSVSGLGTGGMSTKLEAADIARRAGIEVVIASGHHPDVIKKVVAKESIGTHFSAIENPLESRKQWILAGPAAQGSLVLDAGAVKAVTEKGRSLLSKGIIGVKGEFERGATLQLVDQNGKIIARGITRYCGEALGLIAGKHSDEIESVLGYDYGDAIVHRNDMVVL</sequence>